<keyword id="KW-0131">Cell cycle</keyword>
<keyword id="KW-0132">Cell division</keyword>
<keyword id="KW-1185">Reference proteome</keyword>
<evidence type="ECO:0000255" key="1">
    <source>
        <dbReference type="HAMAP-Rule" id="MF_00262"/>
    </source>
</evidence>
<accession>Q7MQZ4</accession>
<comment type="function">
    <text evidence="1">Prevents the cell division inhibition by proteins MinC and MinD at internal division sites while permitting inhibition at polar sites. This ensures cell division at the proper site by restricting the formation of a division septum at the midpoint of the long axis of the cell.</text>
</comment>
<comment type="similarity">
    <text evidence="1">Belongs to the MinE family.</text>
</comment>
<sequence>MSFLDKFFGKEKSSAKSASDRLKLVLAHERAVNLPYLEEMKREILEVIKKYTHAEKIEIKADSNQQIDTLEVEIVLGKNS</sequence>
<protein>
    <recommendedName>
        <fullName evidence="1">Cell division topological specificity factor</fullName>
    </recommendedName>
</protein>
<feature type="chain" id="PRO_0000298215" description="Cell division topological specificity factor">
    <location>
        <begin position="1"/>
        <end position="80"/>
    </location>
</feature>
<dbReference type="EMBL" id="BX571662">
    <property type="protein sequence ID" value="CAE10890.1"/>
    <property type="molecule type" value="Genomic_DNA"/>
</dbReference>
<dbReference type="RefSeq" id="WP_011139673.1">
    <property type="nucleotide sequence ID" value="NC_005090.1"/>
</dbReference>
<dbReference type="SMR" id="Q7MQZ4"/>
<dbReference type="STRING" id="273121.WS1880"/>
<dbReference type="KEGG" id="wsu:WS1880"/>
<dbReference type="eggNOG" id="COG0851">
    <property type="taxonomic scope" value="Bacteria"/>
</dbReference>
<dbReference type="HOGENOM" id="CLU_137929_2_1_7"/>
<dbReference type="Proteomes" id="UP000000422">
    <property type="component" value="Chromosome"/>
</dbReference>
<dbReference type="GO" id="GO:0051301">
    <property type="term" value="P:cell division"/>
    <property type="evidence" value="ECO:0007669"/>
    <property type="project" value="UniProtKB-KW"/>
</dbReference>
<dbReference type="GO" id="GO:0032955">
    <property type="term" value="P:regulation of division septum assembly"/>
    <property type="evidence" value="ECO:0007669"/>
    <property type="project" value="InterPro"/>
</dbReference>
<dbReference type="Gene3D" id="3.30.1070.10">
    <property type="entry name" value="Cell division topological specificity factor MinE"/>
    <property type="match status" value="1"/>
</dbReference>
<dbReference type="HAMAP" id="MF_00262">
    <property type="entry name" value="MinE"/>
    <property type="match status" value="1"/>
</dbReference>
<dbReference type="InterPro" id="IPR005527">
    <property type="entry name" value="MinE"/>
</dbReference>
<dbReference type="InterPro" id="IPR036707">
    <property type="entry name" value="MinE_sf"/>
</dbReference>
<dbReference type="NCBIfam" id="TIGR01215">
    <property type="entry name" value="minE"/>
    <property type="match status" value="1"/>
</dbReference>
<dbReference type="NCBIfam" id="NF001422">
    <property type="entry name" value="PRK00296.1"/>
    <property type="match status" value="1"/>
</dbReference>
<dbReference type="Pfam" id="PF03776">
    <property type="entry name" value="MinE"/>
    <property type="match status" value="1"/>
</dbReference>
<dbReference type="SUPFAM" id="SSF55229">
    <property type="entry name" value="Cell division protein MinE topological specificity domain"/>
    <property type="match status" value="1"/>
</dbReference>
<organism>
    <name type="scientific">Wolinella succinogenes (strain ATCC 29543 / DSM 1740 / CCUG 13145 / JCM 31913 / LMG 7466 / NCTC 11488 / FDC 602W)</name>
    <name type="common">Vibrio succinogenes</name>
    <dbReference type="NCBI Taxonomy" id="273121"/>
    <lineage>
        <taxon>Bacteria</taxon>
        <taxon>Pseudomonadati</taxon>
        <taxon>Campylobacterota</taxon>
        <taxon>Epsilonproteobacteria</taxon>
        <taxon>Campylobacterales</taxon>
        <taxon>Helicobacteraceae</taxon>
        <taxon>Wolinella</taxon>
    </lineage>
</organism>
<name>MINE_WOLSU</name>
<reference key="1">
    <citation type="journal article" date="2003" name="Proc. Natl. Acad. Sci. U.S.A.">
        <title>Complete genome sequence and analysis of Wolinella succinogenes.</title>
        <authorList>
            <person name="Baar C."/>
            <person name="Eppinger M."/>
            <person name="Raddatz G."/>
            <person name="Simon J."/>
            <person name="Lanz C."/>
            <person name="Klimmek O."/>
            <person name="Nandakumar R."/>
            <person name="Gross R."/>
            <person name="Rosinus A."/>
            <person name="Keller H."/>
            <person name="Jagtap P."/>
            <person name="Linke B."/>
            <person name="Meyer F."/>
            <person name="Lederer H."/>
            <person name="Schuster S.C."/>
        </authorList>
    </citation>
    <scope>NUCLEOTIDE SEQUENCE [LARGE SCALE GENOMIC DNA]</scope>
    <source>
        <strain>ATCC 29543 / DSM 1740 / CCUG 13145 / JCM 31913 / LMG 7466 / NCTC 11488 / FDC 602W</strain>
    </source>
</reference>
<proteinExistence type="inferred from homology"/>
<gene>
    <name evidence="1" type="primary">minE</name>
    <name type="ordered locus">WS1880</name>
</gene>